<proteinExistence type="inferred from homology"/>
<keyword id="KW-0325">Glycoprotein</keyword>
<keyword id="KW-0445">Lipid transport</keyword>
<keyword id="KW-0472">Membrane</keyword>
<keyword id="KW-1185">Reference proteome</keyword>
<keyword id="KW-0812">Transmembrane</keyword>
<keyword id="KW-1133">Transmembrane helix</keyword>
<keyword id="KW-0813">Transport</keyword>
<feature type="chain" id="PRO_0000462298" description="Niemann-Pick type C1-related protein">
    <location>
        <begin position="1"/>
        <end position="1178"/>
    </location>
</feature>
<feature type="transmembrane region" description="Helical" evidence="2">
    <location>
        <begin position="157"/>
        <end position="177"/>
    </location>
</feature>
<feature type="transmembrane region" description="Helical" evidence="2">
    <location>
        <begin position="412"/>
        <end position="432"/>
    </location>
</feature>
<feature type="transmembrane region" description="Helical" evidence="2">
    <location>
        <begin position="448"/>
        <end position="468"/>
    </location>
</feature>
<feature type="transmembrane region" description="Helical" evidence="2">
    <location>
        <begin position="478"/>
        <end position="498"/>
    </location>
</feature>
<feature type="transmembrane region" description="Helical" evidence="2">
    <location>
        <begin position="516"/>
        <end position="536"/>
    </location>
</feature>
<feature type="transmembrane region" description="Helical" evidence="2">
    <location>
        <begin position="545"/>
        <end position="565"/>
    </location>
</feature>
<feature type="transmembrane region" description="Helical" evidence="2">
    <location>
        <begin position="789"/>
        <end position="809"/>
    </location>
</feature>
<feature type="transmembrane region" description="Helical" evidence="2">
    <location>
        <begin position="986"/>
        <end position="1006"/>
    </location>
</feature>
<feature type="transmembrane region" description="Helical" evidence="2">
    <location>
        <begin position="1013"/>
        <end position="1033"/>
    </location>
</feature>
<feature type="transmembrane region" description="Helical" evidence="2">
    <location>
        <begin position="1037"/>
        <end position="1057"/>
    </location>
</feature>
<feature type="transmembrane region" description="Helical" evidence="2">
    <location>
        <begin position="1080"/>
        <end position="1100"/>
    </location>
</feature>
<feature type="transmembrane region" description="Helical" evidence="2">
    <location>
        <begin position="1114"/>
        <end position="1134"/>
    </location>
</feature>
<feature type="domain" description="SSD" evidence="3">
    <location>
        <begin position="414"/>
        <end position="570"/>
    </location>
</feature>
<feature type="glycosylation site" description="N-linked (GlcNAc...) asparagine" evidence="4">
    <location>
        <position position="41"/>
    </location>
</feature>
<feature type="glycosylation site" description="N-linked (GlcNAc...) asparagine" evidence="4">
    <location>
        <position position="433"/>
    </location>
</feature>
<feature type="glycosylation site" description="N-linked (GlcNAc...) asparagine" evidence="4">
    <location>
        <position position="621"/>
    </location>
</feature>
<feature type="glycosylation site" description="N-linked (GlcNAc...) asparagine" evidence="4">
    <location>
        <position position="917"/>
    </location>
</feature>
<feature type="glycosylation site" description="N-linked (GlcNAc...) asparagine" evidence="4">
    <location>
        <position position="943"/>
    </location>
</feature>
<organism evidence="9">
    <name type="scientific">Toxoplasma gondii (strain ATCC 50611 / Me49)</name>
    <dbReference type="NCBI Taxonomy" id="508771"/>
    <lineage>
        <taxon>Eukaryota</taxon>
        <taxon>Sar</taxon>
        <taxon>Alveolata</taxon>
        <taxon>Apicomplexa</taxon>
        <taxon>Conoidasida</taxon>
        <taxon>Coccidia</taxon>
        <taxon>Eucoccidiorida</taxon>
        <taxon>Eimeriorina</taxon>
        <taxon>Sarcocystidae</taxon>
        <taxon>Toxoplasma</taxon>
    </lineage>
</organism>
<sequence>MEKNCNSVAGHAGTLVKASSRQADDKAGSRVPPGGHLLQTNKTESQLLPCASPSDPVHWTNEIVPVVADTSAPAEAAPDQTVSDGEQLTRAPDETYYQRSESLAEPPAENELPAGRSRRRRSRWCLGCGCFEQVKTVVLRMLMTGFEKYAGVVYDHPWLFIMVSLLATAGMSVGIFLRTPESDVYTLYSLSGSPSQVTKEHLLDVLPPDRLLFVLLTGTSNLVTRETVTRIDSLLQGIESITLRRDSVTTDEFNHRLVSHDRSPFPETITFQDICAKDGSGKCQVQSILDLYPSSSAWGVMPIASASWPVVTNPVTHKVSRLDAILGKITTSVRLAEQGSGRPALTVVEEAEAMLMRIDLRGETIWKPYTAAFEKLVLDYVLGQDFGPDISVTAKAERSSYDELKRVSTLDVVEWLRLCAAVLVVFLYTSVVNSSKTHRTKLVPSAMGALASLLGYLGGAGLVYLCGVRHTTPAEATPFLAIGIGVDDLFVIINAYSLTYLHPNPKERVVDAIRDAGLSITITTLTNVITFIIGALSPYYSISMFCIITAGALTWGYVLCLTFFLAGLSLDARREARKEPLSYSLFWRFMPRCCRKSSYEPQLSPPLPLTAAASGLEEMRNESEEIVTADQTPPTHGGDLLTTYQLAALMVLYKKHTCQSRSSQPARRLFDRRDGTGTEETMSTPVPEDSERDRTNQKSCGTQVSTGIVDVRETGQDAASQRRLSSHIRDMTTQESIMLLKNFEKEMEQNPEKLLKLYHPEPLGNPGRGSRRFFRDYYGRFLGNTFVKATVLVIFAAVTALAIYGATTLKFGLSLKNITPQASYLRDFYSLHEDLFPSYGDEVTVFFAENDRWEDREVQMRYLQMVKELSEQEWAVVVTDGMSLFLQHAMPSLHSGNRKEFLALLKTWLEGDPIGQNFSTFFKFSFDNLIVWQFRYWMPHRDNTTTLYYWLKEGKDIVSAGKPYFHGEVHTALAVIWESDPKILPFTLTNLSIALVCILAISLLLIPDLTSAIIVVLVVSLVDLWLFGFMALIDLPLSMISMVNLLISIGYSVDFTIHVAHTFTHCVGASRKDRMVETMIVMGAPVTHGMLSTLLSILALAGSPKYILEVFFKMMFMVIVFAYTAGMVLLPVVLTLLGPFHPHGKRESGKAIACDSSAQLIDMEPLHGTGKEEHGVGV</sequence>
<gene>
    <name evidence="7" type="primary">NCR1</name>
    <name evidence="8" type="ORF">TGME49_290870</name>
</gene>
<accession>A0A125YWU9</accession>
<name>NCR1_TOXGM</name>
<protein>
    <recommendedName>
        <fullName evidence="6">Niemann-Pick type C1-related protein</fullName>
        <shortName evidence="6">TgNCR1</shortName>
    </recommendedName>
    <alternativeName>
        <fullName evidence="6">NPC1-related protein</fullName>
    </alternativeName>
    <alternativeName>
        <fullName evidence="8">Patched family protein</fullName>
    </alternativeName>
</protein>
<comment type="function">
    <text evidence="5">Likely facilitates the efflux of cholesterol and gangliosides from membranes (PubMed:22174676). Plays a role in the regulation of lipid homeostasis (PubMed:22174676).</text>
</comment>
<comment type="catalytic activity">
    <reaction evidence="1">
        <text>cholesterol(in) = cholesterol(out)</text>
        <dbReference type="Rhea" id="RHEA:39747"/>
        <dbReference type="ChEBI" id="CHEBI:16113"/>
    </reaction>
</comment>
<comment type="subcellular location">
    <subcellularLocation>
        <location evidence="5">Inner membrane complex</location>
        <topology evidence="2">Multi-pass membrane protein</topology>
    </subcellularLocation>
</comment>
<comment type="disruption phenotype">
    <text evidence="5">Gene knockout results in higher growth rates (PubMed:22174676). Accumulation of numerous lipid bodies in the cytoplasm (PubMed:22174676). Accumulation of several species of cholesteryl esters, with the greatest increase in cholesteryl linoleate, arachidonate, C20:3 and some very-long-chain polyunsaturated fatty acids (PubMed:22174676). Accumulation of several species of very-long-chain fatty acid sphingolipids (PubMed:22174676). Shift to the endopolygeny replication mode with the generation of more than two daughters from one mother cell (PubMed:22174676). Unusual cell cycle with a long S phase and short G1 phase (PubMed:22174676). Formation of long parasitophorous vacuole membranous extensions; connections between some parasitophorous vacuoles from different cells through these membranous extensions (PubMed:22174676). Slight increase in virulence in mice (PubMed:22174676). No significant effects on parasite invasion, replication features or egress in cell culture (PubMed:22174676). No significant effect on sensitivity to extracellular cholesterol (PubMed:22174676).</text>
</comment>
<comment type="similarity">
    <text evidence="7">Belongs to the patched family.</text>
</comment>
<reference evidence="9" key="1">
    <citation type="submission" date="2013-04" db="EMBL/GenBank/DDBJ databases">
        <authorList>
            <person name="Sibley D."/>
            <person name="Venepally P."/>
            <person name="Karamycheva S."/>
            <person name="Hadjithomas M."/>
            <person name="Khan A."/>
            <person name="Brunk B."/>
            <person name="Roos D."/>
            <person name="Caler E."/>
            <person name="Lorenzi H."/>
        </authorList>
    </citation>
    <scope>NUCLEOTIDE SEQUENCE [LARGE SCALE GENOMIC DNA]</scope>
    <source>
        <strain evidence="9">ATCC 50611 / Me49</strain>
    </source>
</reference>
<reference key="2">
    <citation type="journal article" date="2011" name="PLoS Pathog.">
        <title>Deficiency of a Niemann-Pick, type C1-related protein in toxoplasma is associated with multiple lipidoses and increased pathogenicity.</title>
        <authorList>
            <person name="Lige B."/>
            <person name="Romano J.D."/>
            <person name="Bandaru V.V."/>
            <person name="Ehrenman K."/>
            <person name="Levitskaya J."/>
            <person name="Sampels V."/>
            <person name="Haughey N.J."/>
            <person name="Coppens I."/>
        </authorList>
    </citation>
    <scope>FUNCTION</scope>
    <scope>SUBCELLULAR LOCATION</scope>
    <scope>DISRUPTION PHENOTYPE</scope>
</reference>
<evidence type="ECO:0000250" key="1">
    <source>
        <dbReference type="UniProtKB" id="Q8I266"/>
    </source>
</evidence>
<evidence type="ECO:0000255" key="2"/>
<evidence type="ECO:0000255" key="3">
    <source>
        <dbReference type="PROSITE-ProRule" id="PRU00199"/>
    </source>
</evidence>
<evidence type="ECO:0000255" key="4">
    <source>
        <dbReference type="PROSITE-ProRule" id="PRU00498"/>
    </source>
</evidence>
<evidence type="ECO:0000269" key="5">
    <source>
    </source>
</evidence>
<evidence type="ECO:0000303" key="6">
    <source>
    </source>
</evidence>
<evidence type="ECO:0000305" key="7"/>
<evidence type="ECO:0000312" key="8">
    <source>
        <dbReference type="EMBL" id="EPT28045.1"/>
    </source>
</evidence>
<evidence type="ECO:0000312" key="9">
    <source>
        <dbReference type="Proteomes" id="UP000001529"/>
    </source>
</evidence>
<dbReference type="EMBL" id="KE138832">
    <property type="protein sequence ID" value="EPT28045.1"/>
    <property type="molecule type" value="Genomic_DNA"/>
</dbReference>
<dbReference type="RefSeq" id="XP_002368471.1">
    <property type="nucleotide sequence ID" value="XM_002368430.2"/>
</dbReference>
<dbReference type="EnsemblProtists" id="TGME49_290870-t26_1">
    <property type="protein sequence ID" value="TGME49_290870-t26_1"/>
    <property type="gene ID" value="TGME49_290870"/>
</dbReference>
<dbReference type="GeneID" id="7896553"/>
<dbReference type="KEGG" id="tgo:TGME49_290870"/>
<dbReference type="VEuPathDB" id="ToxoDB:TGME49_290870"/>
<dbReference type="OrthoDB" id="6510177at2759"/>
<dbReference type="PhylomeDB" id="A0A125YWU9"/>
<dbReference type="Proteomes" id="UP000001529">
    <property type="component" value="Chromosome IX"/>
</dbReference>
<dbReference type="GO" id="GO:0016020">
    <property type="term" value="C:membrane"/>
    <property type="evidence" value="ECO:0007669"/>
    <property type="project" value="UniProtKB-SubCell"/>
</dbReference>
<dbReference type="Gene3D" id="1.20.1640.10">
    <property type="entry name" value="Multidrug efflux transporter AcrB transmembrane domain"/>
    <property type="match status" value="2"/>
</dbReference>
<dbReference type="InterPro" id="IPR051697">
    <property type="entry name" value="Patched_domain-protein"/>
</dbReference>
<dbReference type="InterPro" id="IPR003392">
    <property type="entry name" value="PTHD_SSD"/>
</dbReference>
<dbReference type="InterPro" id="IPR000731">
    <property type="entry name" value="SSD"/>
</dbReference>
<dbReference type="PANTHER" id="PTHR10796">
    <property type="entry name" value="PATCHED-RELATED"/>
    <property type="match status" value="1"/>
</dbReference>
<dbReference type="PANTHER" id="PTHR10796:SF92">
    <property type="entry name" value="PATCHED-RELATED, ISOFORM A"/>
    <property type="match status" value="1"/>
</dbReference>
<dbReference type="Pfam" id="PF02460">
    <property type="entry name" value="Patched"/>
    <property type="match status" value="1"/>
</dbReference>
<dbReference type="SUPFAM" id="SSF82866">
    <property type="entry name" value="Multidrug efflux transporter AcrB transmembrane domain"/>
    <property type="match status" value="2"/>
</dbReference>
<dbReference type="PROSITE" id="PS50156">
    <property type="entry name" value="SSD"/>
    <property type="match status" value="1"/>
</dbReference>